<name>SYE1_METEP</name>
<evidence type="ECO:0000255" key="1">
    <source>
        <dbReference type="HAMAP-Rule" id="MF_00022"/>
    </source>
</evidence>
<evidence type="ECO:0000256" key="2">
    <source>
        <dbReference type="SAM" id="MobiDB-lite"/>
    </source>
</evidence>
<sequence>MSSPVVTRFAPSPTGFLHIGGARTALFNWLYARRFGGRMLLRIEDTDRERSTQGAIDAILDGMRWLGLDWDGEVIYQFARAERHREVAESLLASGNAYHCYASAEELAQMRETARAEGRAPRYDGRWRDRDPSEAPEGVKPVIRLRAPSEGETVVEDAVQGRVTWANRDLDDLVLLRSDGTPTYMLAVVVDDHDMGVTQVIRGDDHLTNAARQSQIYRALGWDVPAMAHIPLIHGADGAKLSKRHGALGVEEYRDRGYLPAALRNYLVRLGWSHGDQEVFSTEEMIAAFDLKAIGRSAARFDFTKLESLNGLYIRGSADSVLVDAIDAILPARGPERGLPTALTPDLREKLVSAMPGLKERAKTLVELLDSAYYLYAPRPLALDAKAEALLAGDAPERLRALLPALEALPDWNAATTEAAVRQFADSQGVKLGQVAQPLRAALTGRATSPPVFDVLAVLGRDEALARLRDRLPA</sequence>
<gene>
    <name evidence="1" type="primary">gltX1</name>
    <name type="ordered locus">Mext_4681</name>
</gene>
<feature type="chain" id="PRO_0000367708" description="Glutamate--tRNA ligase 1">
    <location>
        <begin position="1"/>
        <end position="474"/>
    </location>
</feature>
<feature type="region of interest" description="Disordered" evidence="2">
    <location>
        <begin position="113"/>
        <end position="136"/>
    </location>
</feature>
<feature type="short sequence motif" description="'HIGH' region" evidence="1">
    <location>
        <begin position="11"/>
        <end position="21"/>
    </location>
</feature>
<feature type="short sequence motif" description="'KMSKS' region" evidence="1">
    <location>
        <begin position="240"/>
        <end position="244"/>
    </location>
</feature>
<feature type="compositionally biased region" description="Basic and acidic residues" evidence="2">
    <location>
        <begin position="113"/>
        <end position="133"/>
    </location>
</feature>
<feature type="binding site" evidence="1">
    <location>
        <position position="243"/>
    </location>
    <ligand>
        <name>ATP</name>
        <dbReference type="ChEBI" id="CHEBI:30616"/>
    </ligand>
</feature>
<dbReference type="EC" id="6.1.1.17" evidence="1"/>
<dbReference type="EMBL" id="CP000908">
    <property type="protein sequence ID" value="ABY33049.1"/>
    <property type="molecule type" value="Genomic_DNA"/>
</dbReference>
<dbReference type="RefSeq" id="WP_012255733.1">
    <property type="nucleotide sequence ID" value="NC_010172.1"/>
</dbReference>
<dbReference type="SMR" id="A9W910"/>
<dbReference type="KEGG" id="mex:Mext_4681"/>
<dbReference type="eggNOG" id="COG0008">
    <property type="taxonomic scope" value="Bacteria"/>
</dbReference>
<dbReference type="HOGENOM" id="CLU_015768_6_0_5"/>
<dbReference type="BioCyc" id="MEXT419610:MEXT_RS23515-MONOMER"/>
<dbReference type="GO" id="GO:0005829">
    <property type="term" value="C:cytosol"/>
    <property type="evidence" value="ECO:0007669"/>
    <property type="project" value="TreeGrafter"/>
</dbReference>
<dbReference type="GO" id="GO:0005524">
    <property type="term" value="F:ATP binding"/>
    <property type="evidence" value="ECO:0007669"/>
    <property type="project" value="UniProtKB-UniRule"/>
</dbReference>
<dbReference type="GO" id="GO:0004818">
    <property type="term" value="F:glutamate-tRNA ligase activity"/>
    <property type="evidence" value="ECO:0007669"/>
    <property type="project" value="UniProtKB-UniRule"/>
</dbReference>
<dbReference type="GO" id="GO:0000049">
    <property type="term" value="F:tRNA binding"/>
    <property type="evidence" value="ECO:0007669"/>
    <property type="project" value="InterPro"/>
</dbReference>
<dbReference type="GO" id="GO:0008270">
    <property type="term" value="F:zinc ion binding"/>
    <property type="evidence" value="ECO:0007669"/>
    <property type="project" value="InterPro"/>
</dbReference>
<dbReference type="GO" id="GO:0006424">
    <property type="term" value="P:glutamyl-tRNA aminoacylation"/>
    <property type="evidence" value="ECO:0007669"/>
    <property type="project" value="UniProtKB-UniRule"/>
</dbReference>
<dbReference type="CDD" id="cd00808">
    <property type="entry name" value="GluRS_core"/>
    <property type="match status" value="1"/>
</dbReference>
<dbReference type="FunFam" id="3.40.50.620:FF:000007">
    <property type="entry name" value="Glutamate--tRNA ligase"/>
    <property type="match status" value="1"/>
</dbReference>
<dbReference type="Gene3D" id="1.10.10.350">
    <property type="match status" value="1"/>
</dbReference>
<dbReference type="Gene3D" id="3.40.50.620">
    <property type="entry name" value="HUPs"/>
    <property type="match status" value="1"/>
</dbReference>
<dbReference type="HAMAP" id="MF_00022">
    <property type="entry name" value="Glu_tRNA_synth_type1"/>
    <property type="match status" value="1"/>
</dbReference>
<dbReference type="InterPro" id="IPR045462">
    <property type="entry name" value="aa-tRNA-synth_I_cd-bd"/>
</dbReference>
<dbReference type="InterPro" id="IPR020751">
    <property type="entry name" value="aa-tRNA-synth_I_codon-bd_sub2"/>
</dbReference>
<dbReference type="InterPro" id="IPR001412">
    <property type="entry name" value="aa-tRNA-synth_I_CS"/>
</dbReference>
<dbReference type="InterPro" id="IPR008925">
    <property type="entry name" value="aa_tRNA-synth_I_cd-bd_sf"/>
</dbReference>
<dbReference type="InterPro" id="IPR004527">
    <property type="entry name" value="Glu-tRNA-ligase_bac/mito"/>
</dbReference>
<dbReference type="InterPro" id="IPR000924">
    <property type="entry name" value="Glu/Gln-tRNA-synth"/>
</dbReference>
<dbReference type="InterPro" id="IPR020058">
    <property type="entry name" value="Glu/Gln-tRNA-synth_Ib_cat-dom"/>
</dbReference>
<dbReference type="InterPro" id="IPR049940">
    <property type="entry name" value="GluQ/Sye"/>
</dbReference>
<dbReference type="InterPro" id="IPR033910">
    <property type="entry name" value="GluRS_core"/>
</dbReference>
<dbReference type="InterPro" id="IPR014729">
    <property type="entry name" value="Rossmann-like_a/b/a_fold"/>
</dbReference>
<dbReference type="NCBIfam" id="TIGR00464">
    <property type="entry name" value="gltX_bact"/>
    <property type="match status" value="1"/>
</dbReference>
<dbReference type="PANTHER" id="PTHR43311">
    <property type="entry name" value="GLUTAMATE--TRNA LIGASE"/>
    <property type="match status" value="1"/>
</dbReference>
<dbReference type="PANTHER" id="PTHR43311:SF2">
    <property type="entry name" value="GLUTAMATE--TRNA LIGASE, MITOCHONDRIAL-RELATED"/>
    <property type="match status" value="1"/>
</dbReference>
<dbReference type="Pfam" id="PF19269">
    <property type="entry name" value="Anticodon_2"/>
    <property type="match status" value="1"/>
</dbReference>
<dbReference type="Pfam" id="PF00749">
    <property type="entry name" value="tRNA-synt_1c"/>
    <property type="match status" value="1"/>
</dbReference>
<dbReference type="PRINTS" id="PR00987">
    <property type="entry name" value="TRNASYNTHGLU"/>
</dbReference>
<dbReference type="SUPFAM" id="SSF48163">
    <property type="entry name" value="An anticodon-binding domain of class I aminoacyl-tRNA synthetases"/>
    <property type="match status" value="1"/>
</dbReference>
<dbReference type="SUPFAM" id="SSF52374">
    <property type="entry name" value="Nucleotidylyl transferase"/>
    <property type="match status" value="1"/>
</dbReference>
<dbReference type="PROSITE" id="PS00178">
    <property type="entry name" value="AA_TRNA_LIGASE_I"/>
    <property type="match status" value="1"/>
</dbReference>
<accession>A9W910</accession>
<keyword id="KW-0030">Aminoacyl-tRNA synthetase</keyword>
<keyword id="KW-0067">ATP-binding</keyword>
<keyword id="KW-0963">Cytoplasm</keyword>
<keyword id="KW-0436">Ligase</keyword>
<keyword id="KW-0547">Nucleotide-binding</keyword>
<keyword id="KW-0648">Protein biosynthesis</keyword>
<protein>
    <recommendedName>
        <fullName evidence="1">Glutamate--tRNA ligase 1</fullName>
        <ecNumber evidence="1">6.1.1.17</ecNumber>
    </recommendedName>
    <alternativeName>
        <fullName evidence="1">Glutamyl-tRNA synthetase 1</fullName>
        <shortName evidence="1">GluRS 1</shortName>
    </alternativeName>
</protein>
<reference key="1">
    <citation type="submission" date="2007-12" db="EMBL/GenBank/DDBJ databases">
        <title>Complete sequence of Methylobacterium extorquens PA1.</title>
        <authorList>
            <consortium name="US DOE Joint Genome Institute"/>
            <person name="Copeland A."/>
            <person name="Lucas S."/>
            <person name="Lapidus A."/>
            <person name="Barry K."/>
            <person name="Glavina del Rio T."/>
            <person name="Dalin E."/>
            <person name="Tice H."/>
            <person name="Pitluck S."/>
            <person name="Saunders E."/>
            <person name="Brettin T."/>
            <person name="Bruce D."/>
            <person name="Detter J.C."/>
            <person name="Han C."/>
            <person name="Schmutz J."/>
            <person name="Larimer F."/>
            <person name="Land M."/>
            <person name="Hauser L."/>
            <person name="Kyrpides N."/>
            <person name="Kim E."/>
            <person name="Marx C."/>
            <person name="Richardson P."/>
        </authorList>
    </citation>
    <scope>NUCLEOTIDE SEQUENCE [LARGE SCALE GENOMIC DNA]</scope>
    <source>
        <strain>PA1</strain>
    </source>
</reference>
<proteinExistence type="inferred from homology"/>
<comment type="function">
    <text evidence="1">Catalyzes the attachment of glutamate to tRNA(Glu) in a two-step reaction: glutamate is first activated by ATP to form Glu-AMP and then transferred to the acceptor end of tRNA(Glu).</text>
</comment>
<comment type="catalytic activity">
    <reaction evidence="1">
        <text>tRNA(Glu) + L-glutamate + ATP = L-glutamyl-tRNA(Glu) + AMP + diphosphate</text>
        <dbReference type="Rhea" id="RHEA:23540"/>
        <dbReference type="Rhea" id="RHEA-COMP:9663"/>
        <dbReference type="Rhea" id="RHEA-COMP:9680"/>
        <dbReference type="ChEBI" id="CHEBI:29985"/>
        <dbReference type="ChEBI" id="CHEBI:30616"/>
        <dbReference type="ChEBI" id="CHEBI:33019"/>
        <dbReference type="ChEBI" id="CHEBI:78442"/>
        <dbReference type="ChEBI" id="CHEBI:78520"/>
        <dbReference type="ChEBI" id="CHEBI:456215"/>
        <dbReference type="EC" id="6.1.1.17"/>
    </reaction>
</comment>
<comment type="subunit">
    <text evidence="1">Monomer.</text>
</comment>
<comment type="subcellular location">
    <subcellularLocation>
        <location evidence="1">Cytoplasm</location>
    </subcellularLocation>
</comment>
<comment type="similarity">
    <text evidence="1">Belongs to the class-I aminoacyl-tRNA synthetase family. Glutamate--tRNA ligase type 1 subfamily.</text>
</comment>
<organism>
    <name type="scientific">Methylorubrum extorquens (strain PA1)</name>
    <name type="common">Methylobacterium extorquens</name>
    <dbReference type="NCBI Taxonomy" id="419610"/>
    <lineage>
        <taxon>Bacteria</taxon>
        <taxon>Pseudomonadati</taxon>
        <taxon>Pseudomonadota</taxon>
        <taxon>Alphaproteobacteria</taxon>
        <taxon>Hyphomicrobiales</taxon>
        <taxon>Methylobacteriaceae</taxon>
        <taxon>Methylorubrum</taxon>
    </lineage>
</organism>